<evidence type="ECO:0000250" key="1"/>
<evidence type="ECO:0000250" key="2">
    <source>
        <dbReference type="UniProtKB" id="P03070"/>
    </source>
</evidence>
<evidence type="ECO:0000255" key="3">
    <source>
        <dbReference type="PROSITE-ProRule" id="PRU00286"/>
    </source>
</evidence>
<evidence type="ECO:0000255" key="4">
    <source>
        <dbReference type="PROSITE-ProRule" id="PRU00551"/>
    </source>
</evidence>
<evidence type="ECO:0000255" key="5">
    <source>
        <dbReference type="PROSITE-ProRule" id="PRU00620"/>
    </source>
</evidence>
<evidence type="ECO:0000255" key="6">
    <source>
        <dbReference type="PROSITE-ProRule" id="PRU00671"/>
    </source>
</evidence>
<evidence type="ECO:0000256" key="7">
    <source>
        <dbReference type="SAM" id="MobiDB-lite"/>
    </source>
</evidence>
<evidence type="ECO:0000305" key="8"/>
<name>LT_POVLY</name>
<feature type="chain" id="PRO_0000115041" description="Large T antigen">
    <location>
        <begin position="1"/>
        <end position="697"/>
    </location>
</feature>
<feature type="domain" description="J" evidence="3">
    <location>
        <begin position="12"/>
        <end position="75"/>
    </location>
</feature>
<feature type="domain" description="SF3 helicase" evidence="4">
    <location>
        <begin position="463"/>
        <end position="623"/>
    </location>
</feature>
<feature type="DNA-binding region" description="T-ag OBD" evidence="5">
    <location>
        <begin position="203"/>
        <end position="323"/>
    </location>
</feature>
<feature type="zinc finger region" description="T-ag D1-type" evidence="6">
    <location>
        <begin position="330"/>
        <end position="422"/>
    </location>
</feature>
<feature type="region of interest" description="Binding to host RB1 protein and transforming activity" evidence="1">
    <location>
        <begin position="131"/>
        <end position="135"/>
    </location>
</feature>
<feature type="region of interest" description="Disordered" evidence="7">
    <location>
        <begin position="136"/>
        <end position="198"/>
    </location>
</feature>
<feature type="short sequence motif" description="Nuclear localization signal" evidence="1">
    <location>
        <begin position="188"/>
        <end position="196"/>
    </location>
</feature>
<feature type="compositionally biased region" description="Pro residues" evidence="7">
    <location>
        <begin position="148"/>
        <end position="158"/>
    </location>
</feature>
<feature type="compositionally biased region" description="Acidic residues" evidence="7">
    <location>
        <begin position="159"/>
        <end position="169"/>
    </location>
</feature>
<feature type="compositionally biased region" description="Low complexity" evidence="7">
    <location>
        <begin position="170"/>
        <end position="183"/>
    </location>
</feature>
<feature type="binding site" evidence="6">
    <location>
        <position position="367"/>
    </location>
    <ligand>
        <name>Zn(2+)</name>
        <dbReference type="ChEBI" id="CHEBI:29105"/>
    </ligand>
</feature>
<feature type="binding site" evidence="6">
    <location>
        <position position="370"/>
    </location>
    <ligand>
        <name>Zn(2+)</name>
        <dbReference type="ChEBI" id="CHEBI:29105"/>
    </ligand>
</feature>
<feature type="binding site" evidence="6">
    <location>
        <position position="378"/>
    </location>
    <ligand>
        <name>Zn(2+)</name>
        <dbReference type="ChEBI" id="CHEBI:29105"/>
    </ligand>
</feature>
<feature type="binding site" evidence="6">
    <location>
        <position position="382"/>
    </location>
    <ligand>
        <name>Zn(2+)</name>
        <dbReference type="ChEBI" id="CHEBI:29105"/>
    </ligand>
</feature>
<feature type="binding site" evidence="4">
    <location>
        <begin position="489"/>
        <end position="496"/>
    </location>
    <ligand>
        <name>ATP</name>
        <dbReference type="ChEBI" id="CHEBI:30616"/>
    </ligand>
</feature>
<feature type="modified residue" description="N-acetylmethionine; by host" evidence="1">
    <location>
        <position position="1"/>
    </location>
</feature>
<feature type="modified residue" description="Phosphoserine; by host" evidence="1">
    <location>
        <position position="134"/>
    </location>
</feature>
<feature type="modified residue" description="Phosphoserine; by host" evidence="1">
    <location>
        <position position="140"/>
    </location>
</feature>
<feature type="modified residue" description="Phosphothreonine; by host" evidence="1">
    <location>
        <position position="187"/>
    </location>
</feature>
<dbReference type="EC" id="5.6.2.4" evidence="2"/>
<dbReference type="EMBL" id="K02562">
    <property type="protein sequence ID" value="AAA47059.2"/>
    <property type="molecule type" value="Genomic_DNA"/>
</dbReference>
<dbReference type="EMBL" id="M30540">
    <property type="protein sequence ID" value="AAA47065.1"/>
    <property type="molecule type" value="Genomic_DNA"/>
</dbReference>
<dbReference type="PIR" id="A03610">
    <property type="entry name" value="TVVPTL"/>
</dbReference>
<dbReference type="RefSeq" id="NP_848008.2">
    <property type="nucleotide sequence ID" value="NC_004763.2"/>
</dbReference>
<dbReference type="SMR" id="P04008"/>
<dbReference type="GeneID" id="1494439"/>
<dbReference type="KEGG" id="vg:1494439"/>
<dbReference type="Proteomes" id="UP000126011">
    <property type="component" value="Segment"/>
</dbReference>
<dbReference type="Proteomes" id="UP000173801">
    <property type="component" value="Segment"/>
</dbReference>
<dbReference type="GO" id="GO:0042025">
    <property type="term" value="C:host cell nucleus"/>
    <property type="evidence" value="ECO:0007669"/>
    <property type="project" value="UniProtKB-SubCell"/>
</dbReference>
<dbReference type="GO" id="GO:0005524">
    <property type="term" value="F:ATP binding"/>
    <property type="evidence" value="ECO:0007669"/>
    <property type="project" value="UniProtKB-KW"/>
</dbReference>
<dbReference type="GO" id="GO:0016887">
    <property type="term" value="F:ATP hydrolysis activity"/>
    <property type="evidence" value="ECO:0007669"/>
    <property type="project" value="InterPro"/>
</dbReference>
<dbReference type="GO" id="GO:0003688">
    <property type="term" value="F:DNA replication origin binding"/>
    <property type="evidence" value="ECO:0007669"/>
    <property type="project" value="InterPro"/>
</dbReference>
<dbReference type="GO" id="GO:0004386">
    <property type="term" value="F:helicase activity"/>
    <property type="evidence" value="ECO:0007669"/>
    <property type="project" value="UniProtKB-KW"/>
</dbReference>
<dbReference type="GO" id="GO:0008270">
    <property type="term" value="F:zinc ion binding"/>
    <property type="evidence" value="ECO:0007669"/>
    <property type="project" value="UniProtKB-KW"/>
</dbReference>
<dbReference type="GO" id="GO:0006260">
    <property type="term" value="P:DNA replication"/>
    <property type="evidence" value="ECO:0007669"/>
    <property type="project" value="UniProtKB-KW"/>
</dbReference>
<dbReference type="GO" id="GO:0039645">
    <property type="term" value="P:symbiont-mediated perturbation of host cell cycle G1/S transition checkpoint"/>
    <property type="evidence" value="ECO:0007669"/>
    <property type="project" value="UniProtKB-KW"/>
</dbReference>
<dbReference type="GO" id="GO:0052170">
    <property type="term" value="P:symbiont-mediated suppression of host innate immune response"/>
    <property type="evidence" value="ECO:0007669"/>
    <property type="project" value="UniProtKB-KW"/>
</dbReference>
<dbReference type="GO" id="GO:0039576">
    <property type="term" value="P:symbiont-mediated suppression of host JAK-STAT cascade via inhibition of JAK1 activity"/>
    <property type="evidence" value="ECO:0007669"/>
    <property type="project" value="UniProtKB-KW"/>
</dbReference>
<dbReference type="GO" id="GO:0039502">
    <property type="term" value="P:symbiont-mediated suppression of host type I interferon-mediated signaling pathway"/>
    <property type="evidence" value="ECO:0007669"/>
    <property type="project" value="UniProtKB-KW"/>
</dbReference>
<dbReference type="CDD" id="cd06257">
    <property type="entry name" value="DnaJ"/>
    <property type="match status" value="1"/>
</dbReference>
<dbReference type="Gene3D" id="3.40.1310.20">
    <property type="match status" value="1"/>
</dbReference>
<dbReference type="Gene3D" id="1.10.287.110">
    <property type="entry name" value="DnaJ domain"/>
    <property type="match status" value="1"/>
</dbReference>
<dbReference type="Gene3D" id="1.20.1050.70">
    <property type="entry name" value="Large T antigen, SV40, domain 3"/>
    <property type="match status" value="1"/>
</dbReference>
<dbReference type="Gene3D" id="3.40.50.300">
    <property type="entry name" value="P-loop containing nucleotide triphosphate hydrolases"/>
    <property type="match status" value="1"/>
</dbReference>
<dbReference type="Gene3D" id="1.10.10.510">
    <property type="entry name" value="Zinc finger, large T-antigen D1 domain"/>
    <property type="match status" value="1"/>
</dbReference>
<dbReference type="InterPro" id="IPR003593">
    <property type="entry name" value="AAA+_ATPase"/>
</dbReference>
<dbReference type="InterPro" id="IPR001623">
    <property type="entry name" value="DnaJ_domain"/>
</dbReference>
<dbReference type="InterPro" id="IPR014015">
    <property type="entry name" value="Helicase_SF3_DNA-vir"/>
</dbReference>
<dbReference type="InterPro" id="IPR036869">
    <property type="entry name" value="J_dom_sf"/>
</dbReference>
<dbReference type="InterPro" id="IPR016392">
    <property type="entry name" value="Lg_T_Ag_polyomavir"/>
</dbReference>
<dbReference type="InterPro" id="IPR010932">
    <property type="entry name" value="Lg_T_Ag_Polyomavir_C"/>
</dbReference>
<dbReference type="InterPro" id="IPR027417">
    <property type="entry name" value="P-loop_NTPase"/>
</dbReference>
<dbReference type="InterPro" id="IPR003133">
    <property type="entry name" value="T_Ag_DNA-bd"/>
</dbReference>
<dbReference type="InterPro" id="IPR017910">
    <property type="entry name" value="Znf_lg_T-Ag_D1-typ"/>
</dbReference>
<dbReference type="InterPro" id="IPR037102">
    <property type="entry name" value="Znf_lg_T-Ag_D1_dom_sf"/>
</dbReference>
<dbReference type="Pfam" id="PF06431">
    <property type="entry name" value="Polyoma_lg_T_C"/>
    <property type="match status" value="1"/>
</dbReference>
<dbReference type="Pfam" id="PF02217">
    <property type="entry name" value="T_Ag_DNA_bind"/>
    <property type="match status" value="1"/>
</dbReference>
<dbReference type="PIRSF" id="PIRSF003368">
    <property type="entry name" value="Large_T_antigen_polyomaV"/>
    <property type="match status" value="1"/>
</dbReference>
<dbReference type="SMART" id="SM00382">
    <property type="entry name" value="AAA"/>
    <property type="match status" value="1"/>
</dbReference>
<dbReference type="SMART" id="SM00271">
    <property type="entry name" value="DnaJ"/>
    <property type="match status" value="1"/>
</dbReference>
<dbReference type="SUPFAM" id="SSF46565">
    <property type="entry name" value="Chaperone J-domain"/>
    <property type="match status" value="1"/>
</dbReference>
<dbReference type="SUPFAM" id="SSF55464">
    <property type="entry name" value="Origin of replication-binding domain, RBD-like"/>
    <property type="match status" value="1"/>
</dbReference>
<dbReference type="SUPFAM" id="SSF52540">
    <property type="entry name" value="P-loop containing nucleoside triphosphate hydrolases"/>
    <property type="match status" value="1"/>
</dbReference>
<dbReference type="PROSITE" id="PS50076">
    <property type="entry name" value="DNAJ_2"/>
    <property type="match status" value="1"/>
</dbReference>
<dbReference type="PROSITE" id="PS51206">
    <property type="entry name" value="SF3_HELICASE_1"/>
    <property type="match status" value="1"/>
</dbReference>
<dbReference type="PROSITE" id="PS51287">
    <property type="entry name" value="T_AG_OBD"/>
    <property type="match status" value="1"/>
</dbReference>
<dbReference type="PROSITE" id="PS51341">
    <property type="entry name" value="ZF_LTAG_D1"/>
    <property type="match status" value="1"/>
</dbReference>
<reference key="1">
    <citation type="journal article" date="1985" name="Virology">
        <title>Complete DNA sequence of lymphotropic papovavirus: prototype of a new species of the polyomavirus genus.</title>
        <authorList>
            <person name="Pawlita M."/>
            <person name="Clad A."/>
            <person name="zur Hausen H."/>
        </authorList>
    </citation>
    <scope>NUCLEOTIDE SEQUENCE [GENOMIC DNA]</scope>
</reference>
<reference key="2">
    <citation type="submission" date="2013-08" db="EMBL/GenBank/DDBJ databases">
        <authorList>
            <person name="Pawlita M."/>
            <person name="Clad A."/>
            <person name="zur Hausen H."/>
        </authorList>
    </citation>
    <scope>SEQUENCE REVISION</scope>
</reference>
<reference key="3">
    <citation type="journal article" date="1986" name="Jpn. J. Med. Sci. Biol.">
        <title>Monkey B-lymphotropic papovavirus genome: the entire DNA sequence and variable regions.</title>
        <authorList>
            <person name="Furuno A."/>
            <person name="Kanda T."/>
            <person name="Yoshiike K."/>
        </authorList>
    </citation>
    <scope>NUCLEOTIDE SEQUENCE [GENOMIC DNA]</scope>
</reference>
<organismHost>
    <name type="scientific">Chlorocebus aethiops</name>
    <name type="common">Green monkey</name>
    <name type="synonym">Cercopithecus aethiops</name>
    <dbReference type="NCBI Taxonomy" id="9534"/>
</organismHost>
<accession>P04008</accession>
<protein>
    <recommendedName>
        <fullName>Large T antigen</fullName>
        <shortName>LT</shortName>
        <shortName>LT-AG</shortName>
        <ecNumber evidence="2">5.6.2.4</ecNumber>
    </recommendedName>
    <alternativeName>
        <fullName evidence="8">DNA 3'-5' helicase large T antigen</fullName>
    </alternativeName>
</protein>
<keyword id="KW-0007">Acetylation</keyword>
<keyword id="KW-0025">Alternative splicing</keyword>
<keyword id="KW-0067">ATP-binding</keyword>
<keyword id="KW-0235">DNA replication</keyword>
<keyword id="KW-0238">DNA-binding</keyword>
<keyword id="KW-0244">Early protein</keyword>
<keyword id="KW-1078">G1/S host cell cycle checkpoint dysregulation by virus</keyword>
<keyword id="KW-0347">Helicase</keyword>
<keyword id="KW-1048">Host nucleus</keyword>
<keyword id="KW-0945">Host-virus interaction</keyword>
<keyword id="KW-0378">Hydrolase</keyword>
<keyword id="KW-1090">Inhibition of host innate immune response by virus</keyword>
<keyword id="KW-1114">Inhibition of host interferon signaling pathway by virus</keyword>
<keyword id="KW-1096">Inhibition of host JAK1 by virus</keyword>
<keyword id="KW-0922">Interferon antiviral system evasion</keyword>
<keyword id="KW-0413">Isomerase</keyword>
<keyword id="KW-0479">Metal-binding</keyword>
<keyword id="KW-1121">Modulation of host cell cycle by virus</keyword>
<keyword id="KW-0547">Nucleotide-binding</keyword>
<keyword id="KW-0553">Oncogene</keyword>
<keyword id="KW-0597">Phosphoprotein</keyword>
<keyword id="KW-1185">Reference proteome</keyword>
<keyword id="KW-0899">Viral immunoevasion</keyword>
<keyword id="KW-0862">Zinc</keyword>
<keyword id="KW-0863">Zinc-finger</keyword>
<sequence length="697" mass="79762">MDQTLSKEERNELMDLLQITRAAWGNLSMMKKAYKNVSKLYHPDKGGDSAKMQRLNELFQRVQVTLMEIRSQCGSSSSQGYFSEDFYFGPTTFQYSPMDRDAVREDLPNPGEGSWGKWWREFVNRQCCDDLFCSETMSSSSDEDTPPAAQPPPPPAPSPEEEDEIEFVEETPSSCDGSSSQSSYTCTPPKRKKTEEKKPDDFPVCLYSFLSHAIYSNKTMNSFLIYTTLEKARQLYKTVEKSKIVVDFKASFSYQDEEGEGCLLFLITLGKHRVSAVKHFCVSQCTFSFIHCKAVVKPLELYKTLSKPPFKLLEENKPGVSMFEFQEEKEQSVNWQEICNFANEANISDVLLLLGIYIDFAVEPGKCGKCEKKQHKFHYNYHKAHHANACLFLESRAQKNICQQAVDQVLAAKRLKLVECSRIELLEERFLQLFDEMDDFLHGEIEILRWMAGVAWYTILLDNSWDVFQNILQLITTSQPKKRNVLIKGPINSGKTTLASAFMHFFDGKALNINCPADKLSFELGCAIDQFCVLLDDVKGQITLNKHLQPGQGVNNLDNLRDHLDGTIKVNLEKKHVNKRSQIFPPVIMTMNEYLLPPTIGVRFALHLHLKPKAYLKQSLEKSDLVAKRILNSGYTILLLLLWYNPVDSFTPKVQEKVVQWKETLEKYVSITQFGNIQQNIIDGKDPLHGIVIEEQM</sequence>
<organism>
    <name type="scientific">B-lymphotropic polyomavirus</name>
    <name type="common">LPV</name>
    <dbReference type="NCBI Taxonomy" id="332091"/>
    <lineage>
        <taxon>Viruses</taxon>
        <taxon>Monodnaviria</taxon>
        <taxon>Shotokuvirae</taxon>
        <taxon>Cossaviricota</taxon>
        <taxon>Papovaviricetes</taxon>
        <taxon>Sepolyvirales</taxon>
        <taxon>Polyomaviridae</taxon>
        <taxon>African green monkey polyomavirus</taxon>
    </lineage>
</organism>
<comment type="function">
    <text evidence="2">Isoform large T antigen is a key early protein essential for both driving viral replication and inducing cellular transformation. Plays a role in viral genome replication by driving entry of quiescent cells into the cell cycle and by autoregulating the synthesis of viral early mRNA. Displays highly oncogenic activities by corrupting the host cellular checkpoint mechanisms that guard cell division and the transcription, replication, and repair of DNA. Participates in the modulation of cellular gene expression preceeding viral DNA replication. This step involves binding to host key cell cycle regulators retinoblastoma protein RB1/pRb and TP53. Induces the disassembly of host E2F1 transcription factors from RB1, thus promoting transcriptional activation of E2F1-regulated S-phase genes. Inhibits host TP53 binding to DNA, abrogating the ability of TP53 to stimulate gene expression. Plays the role of a TFIID-associated factor (TAF) in transcription initiation for all three RNA polymerases, by stabilizing the TBP-TFIIA complex on promoters. Initiates viral DNA replication and unwinding via interactions with the viral origin of replication. Binds two adjacent sites in the SV40 origin. The replication fork movement is facilitated by Large T antigen helicase activity. Has processive 3'-5' DNA helicase activity which requires a short 3' single-stranded region and ATP. Activates the transcription of viral late mRNA, through host TBP and TFIIA stabilization. Interferes with histone deacetylation mediated by HDAC1, leading to activation of transcription (By similarity).</text>
</comment>
<comment type="catalytic activity">
    <reaction evidence="2">
        <text>Couples ATP hydrolysis with the unwinding of duplex DNA by translocating in the 3'-5' direction.</text>
        <dbReference type="EC" id="5.6.2.4"/>
    </reaction>
</comment>
<comment type="catalytic activity">
    <reaction evidence="2">
        <text>ATP + H2O = ADP + phosphate + H(+)</text>
        <dbReference type="Rhea" id="RHEA:13065"/>
        <dbReference type="ChEBI" id="CHEBI:15377"/>
        <dbReference type="ChEBI" id="CHEBI:15378"/>
        <dbReference type="ChEBI" id="CHEBI:30616"/>
        <dbReference type="ChEBI" id="CHEBI:43474"/>
        <dbReference type="ChEBI" id="CHEBI:456216"/>
        <dbReference type="EC" id="5.6.2.4"/>
    </reaction>
</comment>
<comment type="cofactor">
    <cofactor evidence="2">
        <name>Mg(2+)</name>
        <dbReference type="ChEBI" id="CHEBI:18420"/>
    </cofactor>
    <text evidence="2">DNA helicase activity requires Mg(2+).</text>
</comment>
<comment type="subunit">
    <text evidence="1">Forms homohexamers in the presence of ATP. Interacts with host HDAC1. Interacts (via LXCXE domain) with host RB1; the interaction induces the aberrant dissociation of RB1-E2F1 complex thereby disrupting RB1's activity. Interacts (via LXCXE domain) with host pRB-related proteins RBL1 and RBL2. Interacts (via C-terminus) with host TOP1 and POLA1 allowing DNA replication. Interacts with host TP53, inhibiting TP53 binding to DNA. Interacts with host preinitiation complex components TBP, TFIIA and TFIID to regulate transcription initiation (By similarity).</text>
</comment>
<comment type="subcellular location">
    <subcellularLocation>
        <location evidence="1">Host nucleus</location>
    </subcellularLocation>
</comment>
<comment type="alternative products">
    <event type="alternative splicing"/>
    <isoform>
        <id>P04008-1</id>
        <name>Large T antigen</name>
        <sequence type="displayed"/>
    </isoform>
    <isoform>
        <id>P04009-1</id>
        <name>Small t antigen</name>
        <sequence type="external"/>
    </isoform>
</comment>
<comment type="domain">
    <text evidence="1">The J domain is essential for multiple viral activities, including virion assembly, viral DNA replication, transformation and transcriptional activation.</text>
</comment>
<comment type="domain">
    <text evidence="1">The LXCXE motif specifically binds to host pRB, RBL1, and RBL2.</text>
</comment>
<comment type="domain">
    <text evidence="1">The zinc finger region contributes to protein-protein interactions essential for the assembly of stable T-antigen hexamers at the origin of replication. The hexamers are required for subsequent alterations in the structure of origin DNA (By similarity).</text>
</comment>
<comment type="domain">
    <text evidence="1">The ATP binding/ATPase domain is required for proper hexamer assembly and helicase activity.</text>
</comment>
<comment type="PTM">
    <text evidence="1">Phosphorylated on both serine and threonine residues. Small t antigen inhibits the dephosphorylation by the AC form of PP2A (By similarity).</text>
</comment>
<comment type="PTM">
    <text evidence="1">O-Glycosylated near the C-terminal region.</text>
</comment>
<comment type="PTM">
    <text evidence="1">Acetylated by CBP in a TP53-dependent manner.</text>
</comment>
<proteinExistence type="inferred from homology"/>